<sequence length="395" mass="45024">MSSPERKRKRVTSTKNPSVKKKKKISPVPTPIPSLPDDLLVSIFARVSRLYYPILSLVSKSFRSLLRSPELYETRSLLGRTESCLYLCLQEGNPDPNPLWFTLCMKPDRTLKNGKKKKKKKMSSGNLLIPIPVPNPPLEHWSGHASVGSDIYFFGGYMEENVRSSRVVILDCRSHTLREAPSLQMERSDPAASVIDGKIYVAGGVDGDDADSLYPIEVFDIKTQIWDHRPIPYWEKDWGALSRSAYVDGKFYLTIGMKVMAYDLEESRWDFAGYQMGQSWFWSCNCVIENVLYCYGDAFRWFDTKLRLWKVMKVKGLPKLSRNVDVKIADYGGKMAIFWDNPSPSASDTNKIIRCAVIALERPNSEEIWGTVEWHEAVLTVPVSYEFEHALAVTV</sequence>
<gene>
    <name type="ordered locus">At4g39570</name>
    <name type="ORF">F23K16.200</name>
</gene>
<accession>Q9SVA1</accession>
<reference key="1">
    <citation type="journal article" date="1999" name="Nature">
        <title>Sequence and analysis of chromosome 4 of the plant Arabidopsis thaliana.</title>
        <authorList>
            <person name="Mayer K.F.X."/>
            <person name="Schueller C."/>
            <person name="Wambutt R."/>
            <person name="Murphy G."/>
            <person name="Volckaert G."/>
            <person name="Pohl T."/>
            <person name="Duesterhoeft A."/>
            <person name="Stiekema W."/>
            <person name="Entian K.-D."/>
            <person name="Terryn N."/>
            <person name="Harris B."/>
            <person name="Ansorge W."/>
            <person name="Brandt P."/>
            <person name="Grivell L.A."/>
            <person name="Rieger M."/>
            <person name="Weichselgartner M."/>
            <person name="de Simone V."/>
            <person name="Obermaier B."/>
            <person name="Mache R."/>
            <person name="Mueller M."/>
            <person name="Kreis M."/>
            <person name="Delseny M."/>
            <person name="Puigdomenech P."/>
            <person name="Watson M."/>
            <person name="Schmidtheini T."/>
            <person name="Reichert B."/>
            <person name="Portetelle D."/>
            <person name="Perez-Alonso M."/>
            <person name="Boutry M."/>
            <person name="Bancroft I."/>
            <person name="Vos P."/>
            <person name="Hoheisel J."/>
            <person name="Zimmermann W."/>
            <person name="Wedler H."/>
            <person name="Ridley P."/>
            <person name="Langham S.-A."/>
            <person name="McCullagh B."/>
            <person name="Bilham L."/>
            <person name="Robben J."/>
            <person name="van der Schueren J."/>
            <person name="Grymonprez B."/>
            <person name="Chuang Y.-J."/>
            <person name="Vandenbussche F."/>
            <person name="Braeken M."/>
            <person name="Weltjens I."/>
            <person name="Voet M."/>
            <person name="Bastiaens I."/>
            <person name="Aert R."/>
            <person name="Defoor E."/>
            <person name="Weitzenegger T."/>
            <person name="Bothe G."/>
            <person name="Ramsperger U."/>
            <person name="Hilbert H."/>
            <person name="Braun M."/>
            <person name="Holzer E."/>
            <person name="Brandt A."/>
            <person name="Peters S."/>
            <person name="van Staveren M."/>
            <person name="Dirkse W."/>
            <person name="Mooijman P."/>
            <person name="Klein Lankhorst R."/>
            <person name="Rose M."/>
            <person name="Hauf J."/>
            <person name="Koetter P."/>
            <person name="Berneiser S."/>
            <person name="Hempel S."/>
            <person name="Feldpausch M."/>
            <person name="Lamberth S."/>
            <person name="Van den Daele H."/>
            <person name="De Keyser A."/>
            <person name="Buysshaert C."/>
            <person name="Gielen J."/>
            <person name="Villarroel R."/>
            <person name="De Clercq R."/>
            <person name="van Montagu M."/>
            <person name="Rogers J."/>
            <person name="Cronin A."/>
            <person name="Quail M.A."/>
            <person name="Bray-Allen S."/>
            <person name="Clark L."/>
            <person name="Doggett J."/>
            <person name="Hall S."/>
            <person name="Kay M."/>
            <person name="Lennard N."/>
            <person name="McLay K."/>
            <person name="Mayes R."/>
            <person name="Pettett A."/>
            <person name="Rajandream M.A."/>
            <person name="Lyne M."/>
            <person name="Benes V."/>
            <person name="Rechmann S."/>
            <person name="Borkova D."/>
            <person name="Bloecker H."/>
            <person name="Scharfe M."/>
            <person name="Grimm M."/>
            <person name="Loehnert T.-H."/>
            <person name="Dose S."/>
            <person name="de Haan M."/>
            <person name="Maarse A.C."/>
            <person name="Schaefer M."/>
            <person name="Mueller-Auer S."/>
            <person name="Gabel C."/>
            <person name="Fuchs M."/>
            <person name="Fartmann B."/>
            <person name="Granderath K."/>
            <person name="Dauner D."/>
            <person name="Herzl A."/>
            <person name="Neumann S."/>
            <person name="Argiriou A."/>
            <person name="Vitale D."/>
            <person name="Liguori R."/>
            <person name="Piravandi E."/>
            <person name="Massenet O."/>
            <person name="Quigley F."/>
            <person name="Clabauld G."/>
            <person name="Muendlein A."/>
            <person name="Felber R."/>
            <person name="Schnabl S."/>
            <person name="Hiller R."/>
            <person name="Schmidt W."/>
            <person name="Lecharny A."/>
            <person name="Aubourg S."/>
            <person name="Chefdor F."/>
            <person name="Cooke R."/>
            <person name="Berger C."/>
            <person name="Monfort A."/>
            <person name="Casacuberta E."/>
            <person name="Gibbons T."/>
            <person name="Weber N."/>
            <person name="Vandenbol M."/>
            <person name="Bargues M."/>
            <person name="Terol J."/>
            <person name="Torres A."/>
            <person name="Perez-Perez A."/>
            <person name="Purnelle B."/>
            <person name="Bent E."/>
            <person name="Johnson S."/>
            <person name="Tacon D."/>
            <person name="Jesse T."/>
            <person name="Heijnen L."/>
            <person name="Schwarz S."/>
            <person name="Scholler P."/>
            <person name="Heber S."/>
            <person name="Francs P."/>
            <person name="Bielke C."/>
            <person name="Frishman D."/>
            <person name="Haase D."/>
            <person name="Lemcke K."/>
            <person name="Mewes H.-W."/>
            <person name="Stocker S."/>
            <person name="Zaccaria P."/>
            <person name="Bevan M."/>
            <person name="Wilson R.K."/>
            <person name="de la Bastide M."/>
            <person name="Habermann K."/>
            <person name="Parnell L."/>
            <person name="Dedhia N."/>
            <person name="Gnoj L."/>
            <person name="Schutz K."/>
            <person name="Huang E."/>
            <person name="Spiegel L."/>
            <person name="Sekhon M."/>
            <person name="Murray J."/>
            <person name="Sheet P."/>
            <person name="Cordes M."/>
            <person name="Abu-Threideh J."/>
            <person name="Stoneking T."/>
            <person name="Kalicki J."/>
            <person name="Graves T."/>
            <person name="Harmon G."/>
            <person name="Edwards J."/>
            <person name="Latreille P."/>
            <person name="Courtney L."/>
            <person name="Cloud J."/>
            <person name="Abbott A."/>
            <person name="Scott K."/>
            <person name="Johnson D."/>
            <person name="Minx P."/>
            <person name="Bentley D."/>
            <person name="Fulton B."/>
            <person name="Miller N."/>
            <person name="Greco T."/>
            <person name="Kemp K."/>
            <person name="Kramer J."/>
            <person name="Fulton L."/>
            <person name="Mardis E."/>
            <person name="Dante M."/>
            <person name="Pepin K."/>
            <person name="Hillier L.W."/>
            <person name="Nelson J."/>
            <person name="Spieth J."/>
            <person name="Ryan E."/>
            <person name="Andrews S."/>
            <person name="Geisel C."/>
            <person name="Layman D."/>
            <person name="Du H."/>
            <person name="Ali J."/>
            <person name="Berghoff A."/>
            <person name="Jones K."/>
            <person name="Drone K."/>
            <person name="Cotton M."/>
            <person name="Joshu C."/>
            <person name="Antonoiu B."/>
            <person name="Zidanic M."/>
            <person name="Strong C."/>
            <person name="Sun H."/>
            <person name="Lamar B."/>
            <person name="Yordan C."/>
            <person name="Ma P."/>
            <person name="Zhong J."/>
            <person name="Preston R."/>
            <person name="Vil D."/>
            <person name="Shekher M."/>
            <person name="Matero A."/>
            <person name="Shah R."/>
            <person name="Swaby I.K."/>
            <person name="O'Shaughnessy A."/>
            <person name="Rodriguez M."/>
            <person name="Hoffman J."/>
            <person name="Till S."/>
            <person name="Granat S."/>
            <person name="Shohdy N."/>
            <person name="Hasegawa A."/>
            <person name="Hameed A."/>
            <person name="Lodhi M."/>
            <person name="Johnson A."/>
            <person name="Chen E."/>
            <person name="Marra M.A."/>
            <person name="Martienssen R."/>
            <person name="McCombie W.R."/>
        </authorList>
    </citation>
    <scope>NUCLEOTIDE SEQUENCE [LARGE SCALE GENOMIC DNA]</scope>
    <source>
        <strain>cv. Columbia</strain>
    </source>
</reference>
<reference key="2">
    <citation type="journal article" date="2017" name="Plant J.">
        <title>Araport11: a complete reannotation of the Arabidopsis thaliana reference genome.</title>
        <authorList>
            <person name="Cheng C.Y."/>
            <person name="Krishnakumar V."/>
            <person name="Chan A.P."/>
            <person name="Thibaud-Nissen F."/>
            <person name="Schobel S."/>
            <person name="Town C.D."/>
        </authorList>
    </citation>
    <scope>GENOME REANNOTATION</scope>
    <source>
        <strain>cv. Columbia</strain>
    </source>
</reference>
<reference key="3">
    <citation type="submission" date="2004-03" db="EMBL/GenBank/DDBJ databases">
        <title>Arabidopsis ORF clones.</title>
        <authorList>
            <person name="Cheuk R.F."/>
            <person name="Chen H."/>
            <person name="Kim C.J."/>
            <person name="Shinn P."/>
            <person name="Ecker J.R."/>
        </authorList>
    </citation>
    <scope>NUCLEOTIDE SEQUENCE [LARGE SCALE MRNA]</scope>
    <source>
        <strain>cv. Columbia</strain>
    </source>
</reference>
<protein>
    <recommendedName>
        <fullName>F-box/kelch-repeat protein At4g39570</fullName>
    </recommendedName>
</protein>
<keyword id="KW-0880">Kelch repeat</keyword>
<keyword id="KW-1185">Reference proteome</keyword>
<keyword id="KW-0677">Repeat</keyword>
<organism>
    <name type="scientific">Arabidopsis thaliana</name>
    <name type="common">Mouse-ear cress</name>
    <dbReference type="NCBI Taxonomy" id="3702"/>
    <lineage>
        <taxon>Eukaryota</taxon>
        <taxon>Viridiplantae</taxon>
        <taxon>Streptophyta</taxon>
        <taxon>Embryophyta</taxon>
        <taxon>Tracheophyta</taxon>
        <taxon>Spermatophyta</taxon>
        <taxon>Magnoliopsida</taxon>
        <taxon>eudicotyledons</taxon>
        <taxon>Gunneridae</taxon>
        <taxon>Pentapetalae</taxon>
        <taxon>rosids</taxon>
        <taxon>malvids</taxon>
        <taxon>Brassicales</taxon>
        <taxon>Brassicaceae</taxon>
        <taxon>Camelineae</taxon>
        <taxon>Arabidopsis</taxon>
    </lineage>
</organism>
<name>FK100_ARATH</name>
<feature type="chain" id="PRO_0000283258" description="F-box/kelch-repeat protein At4g39570">
    <location>
        <begin position="1"/>
        <end position="395"/>
    </location>
</feature>
<feature type="domain" description="F-box" evidence="1">
    <location>
        <begin position="29"/>
        <end position="75"/>
    </location>
</feature>
<feature type="repeat" description="Kelch 1">
    <location>
        <begin position="150"/>
        <end position="197"/>
    </location>
</feature>
<feature type="repeat" description="Kelch 2">
    <location>
        <begin position="198"/>
        <end position="246"/>
    </location>
</feature>
<feature type="region of interest" description="Disordered" evidence="2">
    <location>
        <begin position="1"/>
        <end position="29"/>
    </location>
</feature>
<feature type="compositionally biased region" description="Basic residues" evidence="2">
    <location>
        <begin position="1"/>
        <end position="25"/>
    </location>
</feature>
<dbReference type="EMBL" id="AL078620">
    <property type="protein sequence ID" value="CAB44692.1"/>
    <property type="molecule type" value="Genomic_DNA"/>
</dbReference>
<dbReference type="EMBL" id="AL161595">
    <property type="protein sequence ID" value="CAB80620.1"/>
    <property type="molecule type" value="Genomic_DNA"/>
</dbReference>
<dbReference type="EMBL" id="CP002687">
    <property type="protein sequence ID" value="AEE87089.1"/>
    <property type="molecule type" value="Genomic_DNA"/>
</dbReference>
<dbReference type="EMBL" id="BT011610">
    <property type="protein sequence ID" value="AAS47616.1"/>
    <property type="molecule type" value="mRNA"/>
</dbReference>
<dbReference type="EMBL" id="BT012265">
    <property type="protein sequence ID" value="AAS76752.1"/>
    <property type="molecule type" value="mRNA"/>
</dbReference>
<dbReference type="PIR" id="T09373">
    <property type="entry name" value="T09373"/>
</dbReference>
<dbReference type="RefSeq" id="NP_195667.1">
    <property type="nucleotide sequence ID" value="NM_120117.4"/>
</dbReference>
<dbReference type="SMR" id="Q9SVA1"/>
<dbReference type="GlyGen" id="Q9SVA1">
    <property type="glycosylation" value="1 site"/>
</dbReference>
<dbReference type="PaxDb" id="3702-AT4G39570.1"/>
<dbReference type="ProteomicsDB" id="228926"/>
<dbReference type="EnsemblPlants" id="AT4G39570.1">
    <property type="protein sequence ID" value="AT4G39570.1"/>
    <property type="gene ID" value="AT4G39570"/>
</dbReference>
<dbReference type="GeneID" id="830111"/>
<dbReference type="Gramene" id="AT4G39570.1">
    <property type="protein sequence ID" value="AT4G39570.1"/>
    <property type="gene ID" value="AT4G39570"/>
</dbReference>
<dbReference type="KEGG" id="ath:AT4G39570"/>
<dbReference type="Araport" id="AT4G39570"/>
<dbReference type="TAIR" id="AT4G39570"/>
<dbReference type="eggNOG" id="KOG1072">
    <property type="taxonomic scope" value="Eukaryota"/>
</dbReference>
<dbReference type="HOGENOM" id="CLU_032521_1_2_1"/>
<dbReference type="InParanoid" id="Q9SVA1"/>
<dbReference type="OMA" id="GGYMEEN"/>
<dbReference type="PhylomeDB" id="Q9SVA1"/>
<dbReference type="PRO" id="PR:Q9SVA1"/>
<dbReference type="Proteomes" id="UP000006548">
    <property type="component" value="Chromosome 4"/>
</dbReference>
<dbReference type="ExpressionAtlas" id="Q9SVA1">
    <property type="expression patterns" value="baseline and differential"/>
</dbReference>
<dbReference type="CDD" id="cd22152">
    <property type="entry name" value="F-box_AtAFR-like"/>
    <property type="match status" value="1"/>
</dbReference>
<dbReference type="Gene3D" id="2.120.10.80">
    <property type="entry name" value="Kelch-type beta propeller"/>
    <property type="match status" value="1"/>
</dbReference>
<dbReference type="InterPro" id="IPR036047">
    <property type="entry name" value="F-box-like_dom_sf"/>
</dbReference>
<dbReference type="InterPro" id="IPR050354">
    <property type="entry name" value="F-box/kelch-repeat_ARATH"/>
</dbReference>
<dbReference type="InterPro" id="IPR001810">
    <property type="entry name" value="F-box_dom"/>
</dbReference>
<dbReference type="InterPro" id="IPR015915">
    <property type="entry name" value="Kelch-typ_b-propeller"/>
</dbReference>
<dbReference type="InterPro" id="IPR006652">
    <property type="entry name" value="Kelch_1"/>
</dbReference>
<dbReference type="PANTHER" id="PTHR24414">
    <property type="entry name" value="F-BOX/KELCH-REPEAT PROTEIN SKIP4"/>
    <property type="match status" value="1"/>
</dbReference>
<dbReference type="PANTHER" id="PTHR24414:SF184">
    <property type="entry name" value="GALACTOSE OXIDASE_KELCH REPEAT SUPERFAMILY PROTEIN"/>
    <property type="match status" value="1"/>
</dbReference>
<dbReference type="Pfam" id="PF00646">
    <property type="entry name" value="F-box"/>
    <property type="match status" value="1"/>
</dbReference>
<dbReference type="Pfam" id="PF25210">
    <property type="entry name" value="Kelch_FKB95"/>
    <property type="match status" value="1"/>
</dbReference>
<dbReference type="SMART" id="SM00256">
    <property type="entry name" value="FBOX"/>
    <property type="match status" value="1"/>
</dbReference>
<dbReference type="SMART" id="SM00612">
    <property type="entry name" value="Kelch"/>
    <property type="match status" value="1"/>
</dbReference>
<dbReference type="SUPFAM" id="SSF81383">
    <property type="entry name" value="F-box domain"/>
    <property type="match status" value="1"/>
</dbReference>
<dbReference type="SUPFAM" id="SSF117281">
    <property type="entry name" value="Kelch motif"/>
    <property type="match status" value="1"/>
</dbReference>
<dbReference type="PROSITE" id="PS50181">
    <property type="entry name" value="FBOX"/>
    <property type="match status" value="1"/>
</dbReference>
<evidence type="ECO:0000255" key="1">
    <source>
        <dbReference type="PROSITE-ProRule" id="PRU00080"/>
    </source>
</evidence>
<evidence type="ECO:0000256" key="2">
    <source>
        <dbReference type="SAM" id="MobiDB-lite"/>
    </source>
</evidence>
<proteinExistence type="evidence at transcript level"/>